<protein>
    <recommendedName>
        <fullName>Ferredoxin</fullName>
    </recommendedName>
</protein>
<keyword id="KW-0001">2Fe-2S</keyword>
<keyword id="KW-0150">Chloroplast</keyword>
<keyword id="KW-0903">Direct protein sequencing</keyword>
<keyword id="KW-0249">Electron transport</keyword>
<keyword id="KW-0408">Iron</keyword>
<keyword id="KW-0411">Iron-sulfur</keyword>
<keyword id="KW-0479">Metal-binding</keyword>
<keyword id="KW-0934">Plastid</keyword>
<keyword id="KW-0813">Transport</keyword>
<reference key="1">
    <citation type="journal article" date="1989" name="Protein Seq. Data Anal.">
        <title>Amino acid sequence of ferredoxin isolated from Cyanidium caldarium strain RK-1.</title>
        <authorList>
            <person name="Nagashima H."/>
            <person name="Sakai K."/>
            <person name="Kamo M."/>
            <person name="Tsugita A."/>
        </authorList>
    </citation>
    <scope>PROTEIN SEQUENCE</scope>
    <source>
        <strain>RK-1</strain>
    </source>
</reference>
<proteinExistence type="evidence at protein level"/>
<gene>
    <name type="primary">PETF</name>
</gene>
<evidence type="ECO:0000250" key="1"/>
<evidence type="ECO:0000255" key="2">
    <source>
        <dbReference type="PROSITE-ProRule" id="PRU00465"/>
    </source>
</evidence>
<evidence type="ECO:0000305" key="3"/>
<organism>
    <name type="scientific">Cyanidium caldarium</name>
    <name type="common">Red alga</name>
    <dbReference type="NCBI Taxonomy" id="2771"/>
    <lineage>
        <taxon>Eukaryota</taxon>
        <taxon>Rhodophyta</taxon>
        <taxon>Bangiophyceae</taxon>
        <taxon>Cyanidiales</taxon>
        <taxon>Cyanidiaceae</taxon>
        <taxon>Cyanidium</taxon>
    </lineage>
</organism>
<sequence length="97" mass="10599">MYKIQLVNQKEGVDVTINCPGDQYILDAAEEQGVDLPYSCRAGACSTCAGKLVKGSVDQSDQSFLDEEQINNGFILTCVAYPTSDCVIQTHQEEALY</sequence>
<dbReference type="SMR" id="P15789"/>
<dbReference type="GO" id="GO:0009507">
    <property type="term" value="C:chloroplast"/>
    <property type="evidence" value="ECO:0007669"/>
    <property type="project" value="UniProtKB-SubCell"/>
</dbReference>
<dbReference type="GO" id="GO:0051537">
    <property type="term" value="F:2 iron, 2 sulfur cluster binding"/>
    <property type="evidence" value="ECO:0007669"/>
    <property type="project" value="UniProtKB-KW"/>
</dbReference>
<dbReference type="GO" id="GO:0009055">
    <property type="term" value="F:electron transfer activity"/>
    <property type="evidence" value="ECO:0007669"/>
    <property type="project" value="InterPro"/>
</dbReference>
<dbReference type="GO" id="GO:0046872">
    <property type="term" value="F:metal ion binding"/>
    <property type="evidence" value="ECO:0007669"/>
    <property type="project" value="UniProtKB-KW"/>
</dbReference>
<dbReference type="GO" id="GO:0022900">
    <property type="term" value="P:electron transport chain"/>
    <property type="evidence" value="ECO:0007669"/>
    <property type="project" value="InterPro"/>
</dbReference>
<dbReference type="CDD" id="cd00207">
    <property type="entry name" value="fer2"/>
    <property type="match status" value="1"/>
</dbReference>
<dbReference type="FunFam" id="3.10.20.30:FF:000014">
    <property type="entry name" value="Ferredoxin"/>
    <property type="match status" value="1"/>
</dbReference>
<dbReference type="Gene3D" id="3.10.20.30">
    <property type="match status" value="1"/>
</dbReference>
<dbReference type="InterPro" id="IPR036010">
    <property type="entry name" value="2Fe-2S_ferredoxin-like_sf"/>
</dbReference>
<dbReference type="InterPro" id="IPR001041">
    <property type="entry name" value="2Fe-2S_ferredoxin-type"/>
</dbReference>
<dbReference type="InterPro" id="IPR006058">
    <property type="entry name" value="2Fe2S_fd_BS"/>
</dbReference>
<dbReference type="InterPro" id="IPR012675">
    <property type="entry name" value="Beta-grasp_dom_sf"/>
</dbReference>
<dbReference type="InterPro" id="IPR010241">
    <property type="entry name" value="Fd_pln"/>
</dbReference>
<dbReference type="NCBIfam" id="TIGR02008">
    <property type="entry name" value="fdx_plant"/>
    <property type="match status" value="1"/>
</dbReference>
<dbReference type="PANTHER" id="PTHR43112">
    <property type="entry name" value="FERREDOXIN"/>
    <property type="match status" value="1"/>
</dbReference>
<dbReference type="PANTHER" id="PTHR43112:SF3">
    <property type="entry name" value="FERREDOXIN-2, CHLOROPLASTIC"/>
    <property type="match status" value="1"/>
</dbReference>
<dbReference type="Pfam" id="PF00111">
    <property type="entry name" value="Fer2"/>
    <property type="match status" value="1"/>
</dbReference>
<dbReference type="SUPFAM" id="SSF54292">
    <property type="entry name" value="2Fe-2S ferredoxin-like"/>
    <property type="match status" value="1"/>
</dbReference>
<dbReference type="PROSITE" id="PS00197">
    <property type="entry name" value="2FE2S_FER_1"/>
    <property type="match status" value="1"/>
</dbReference>
<dbReference type="PROSITE" id="PS51085">
    <property type="entry name" value="2FE2S_FER_2"/>
    <property type="match status" value="1"/>
</dbReference>
<accession>P15789</accession>
<feature type="chain" id="PRO_0000189317" description="Ferredoxin">
    <location>
        <begin position="1"/>
        <end position="97"/>
    </location>
</feature>
<feature type="domain" description="2Fe-2S ferredoxin-type" evidence="2">
    <location>
        <begin position="2"/>
        <end position="94"/>
    </location>
</feature>
<feature type="binding site" evidence="2">
    <location>
        <position position="40"/>
    </location>
    <ligand>
        <name>[2Fe-2S] cluster</name>
        <dbReference type="ChEBI" id="CHEBI:190135"/>
    </ligand>
</feature>
<feature type="binding site" evidence="2">
    <location>
        <position position="45"/>
    </location>
    <ligand>
        <name>[2Fe-2S] cluster</name>
        <dbReference type="ChEBI" id="CHEBI:190135"/>
    </ligand>
</feature>
<feature type="binding site" evidence="2">
    <location>
        <position position="48"/>
    </location>
    <ligand>
        <name>[2Fe-2S] cluster</name>
        <dbReference type="ChEBI" id="CHEBI:190135"/>
    </ligand>
</feature>
<feature type="binding site" evidence="2">
    <location>
        <position position="78"/>
    </location>
    <ligand>
        <name>[2Fe-2S] cluster</name>
        <dbReference type="ChEBI" id="CHEBI:190135"/>
    </ligand>
</feature>
<name>FER2_CYACA</name>
<comment type="function">
    <text>Ferredoxins are iron-sulfur proteins that transfer electrons in a wide variety of metabolic reactions.</text>
</comment>
<comment type="cofactor">
    <cofactor>
        <name>[2Fe-2S] cluster</name>
        <dbReference type="ChEBI" id="CHEBI:190135"/>
    </cofactor>
    <text>Binds 1 [2Fe-2S] cluster.</text>
</comment>
<comment type="subunit">
    <text evidence="1">Forms a complex with heterodimeric ferredoxin-thioredoxin reductase (FTR) and thioredoxin.</text>
</comment>
<comment type="subcellular location">
    <subcellularLocation>
        <location>Plastid</location>
        <location>Chloroplast</location>
    </subcellularLocation>
</comment>
<comment type="similarity">
    <text evidence="3">Belongs to the 2Fe2S plant-type ferredoxin family.</text>
</comment>